<accession>C1KYP9</accession>
<dbReference type="EC" id="2.5.1.145" evidence="1"/>
<dbReference type="EMBL" id="FM242711">
    <property type="protein sequence ID" value="CAS06206.1"/>
    <property type="molecule type" value="Genomic_DNA"/>
</dbReference>
<dbReference type="RefSeq" id="WP_003725415.1">
    <property type="nucleotide sequence ID" value="NC_012488.1"/>
</dbReference>
<dbReference type="SMR" id="C1KYP9"/>
<dbReference type="KEGG" id="lmc:Lm4b_02451"/>
<dbReference type="HOGENOM" id="CLU_013386_1_2_9"/>
<dbReference type="UniPathway" id="UPA00664"/>
<dbReference type="GO" id="GO:0005886">
    <property type="term" value="C:plasma membrane"/>
    <property type="evidence" value="ECO:0007669"/>
    <property type="project" value="UniProtKB-SubCell"/>
</dbReference>
<dbReference type="GO" id="GO:0008961">
    <property type="term" value="F:phosphatidylglycerol-prolipoprotein diacylglyceryl transferase activity"/>
    <property type="evidence" value="ECO:0007669"/>
    <property type="project" value="UniProtKB-UniRule"/>
</dbReference>
<dbReference type="GO" id="GO:0042158">
    <property type="term" value="P:lipoprotein biosynthetic process"/>
    <property type="evidence" value="ECO:0007669"/>
    <property type="project" value="UniProtKB-UniRule"/>
</dbReference>
<dbReference type="HAMAP" id="MF_01147">
    <property type="entry name" value="Lgt"/>
    <property type="match status" value="1"/>
</dbReference>
<dbReference type="InterPro" id="IPR001640">
    <property type="entry name" value="Lgt"/>
</dbReference>
<dbReference type="NCBIfam" id="TIGR00544">
    <property type="entry name" value="lgt"/>
    <property type="match status" value="1"/>
</dbReference>
<dbReference type="PANTHER" id="PTHR30589:SF0">
    <property type="entry name" value="PHOSPHATIDYLGLYCEROL--PROLIPOPROTEIN DIACYLGLYCERYL TRANSFERASE"/>
    <property type="match status" value="1"/>
</dbReference>
<dbReference type="PANTHER" id="PTHR30589">
    <property type="entry name" value="PROLIPOPROTEIN DIACYLGLYCERYL TRANSFERASE"/>
    <property type="match status" value="1"/>
</dbReference>
<dbReference type="Pfam" id="PF01790">
    <property type="entry name" value="LGT"/>
    <property type="match status" value="1"/>
</dbReference>
<dbReference type="PROSITE" id="PS01311">
    <property type="entry name" value="LGT"/>
    <property type="match status" value="1"/>
</dbReference>
<gene>
    <name evidence="1" type="primary">lgt</name>
    <name type="ordered locus">Lm4b_02451</name>
</gene>
<keyword id="KW-1003">Cell membrane</keyword>
<keyword id="KW-0472">Membrane</keyword>
<keyword id="KW-0808">Transferase</keyword>
<keyword id="KW-0812">Transmembrane</keyword>
<keyword id="KW-1133">Transmembrane helix</keyword>
<comment type="function">
    <text evidence="1">Catalyzes the transfer of the diacylglyceryl group from phosphatidylglycerol to the sulfhydryl group of the N-terminal cysteine of a prolipoprotein, the first step in the formation of mature lipoproteins.</text>
</comment>
<comment type="catalytic activity">
    <reaction evidence="1">
        <text>L-cysteinyl-[prolipoprotein] + a 1,2-diacyl-sn-glycero-3-phospho-(1'-sn-glycerol) = an S-1,2-diacyl-sn-glyceryl-L-cysteinyl-[prolipoprotein] + sn-glycerol 1-phosphate + H(+)</text>
        <dbReference type="Rhea" id="RHEA:56712"/>
        <dbReference type="Rhea" id="RHEA-COMP:14679"/>
        <dbReference type="Rhea" id="RHEA-COMP:14680"/>
        <dbReference type="ChEBI" id="CHEBI:15378"/>
        <dbReference type="ChEBI" id="CHEBI:29950"/>
        <dbReference type="ChEBI" id="CHEBI:57685"/>
        <dbReference type="ChEBI" id="CHEBI:64716"/>
        <dbReference type="ChEBI" id="CHEBI:140658"/>
        <dbReference type="EC" id="2.5.1.145"/>
    </reaction>
</comment>
<comment type="pathway">
    <text evidence="1">Protein modification; lipoprotein biosynthesis (diacylglyceryl transfer).</text>
</comment>
<comment type="subcellular location">
    <subcellularLocation>
        <location evidence="1">Cell membrane</location>
        <topology evidence="1">Multi-pass membrane protein</topology>
    </subcellularLocation>
</comment>
<comment type="similarity">
    <text evidence="1">Belongs to the Lgt family.</text>
</comment>
<name>LGT_LISMC</name>
<feature type="chain" id="PRO_1000213654" description="Phosphatidylglycerol--prolipoprotein diacylglyceryl transferase">
    <location>
        <begin position="1"/>
        <end position="277"/>
    </location>
</feature>
<feature type="transmembrane region" description="Helical" evidence="1">
    <location>
        <begin position="18"/>
        <end position="38"/>
    </location>
</feature>
<feature type="transmembrane region" description="Helical" evidence="1">
    <location>
        <begin position="51"/>
        <end position="71"/>
    </location>
</feature>
<feature type="transmembrane region" description="Helical" evidence="1">
    <location>
        <begin position="89"/>
        <end position="109"/>
    </location>
</feature>
<feature type="transmembrane region" description="Helical" evidence="1">
    <location>
        <begin position="116"/>
        <end position="136"/>
    </location>
</feature>
<feature type="transmembrane region" description="Helical" evidence="1">
    <location>
        <begin position="177"/>
        <end position="197"/>
    </location>
</feature>
<feature type="transmembrane region" description="Helical" evidence="1">
    <location>
        <begin position="205"/>
        <end position="225"/>
    </location>
</feature>
<feature type="transmembrane region" description="Helical" evidence="1">
    <location>
        <begin position="235"/>
        <end position="255"/>
    </location>
</feature>
<feature type="binding site" evidence="1">
    <location>
        <position position="137"/>
    </location>
    <ligand>
        <name>a 1,2-diacyl-sn-glycero-3-phospho-(1'-sn-glycerol)</name>
        <dbReference type="ChEBI" id="CHEBI:64716"/>
    </ligand>
</feature>
<proteinExistence type="inferred from homology"/>
<protein>
    <recommendedName>
        <fullName evidence="1">Phosphatidylglycerol--prolipoprotein diacylglyceryl transferase</fullName>
        <ecNumber evidence="1">2.5.1.145</ecNumber>
    </recommendedName>
</protein>
<reference key="1">
    <citation type="journal article" date="2012" name="BMC Genomics">
        <title>Comparative genomics and transcriptomics of lineages I, II, and III strains of Listeria monocytogenes.</title>
        <authorList>
            <person name="Hain T."/>
            <person name="Ghai R."/>
            <person name="Billion A."/>
            <person name="Kuenne C.T."/>
            <person name="Steinweg C."/>
            <person name="Izar B."/>
            <person name="Mohamed W."/>
            <person name="Mraheil M."/>
            <person name="Domann E."/>
            <person name="Schaffrath S."/>
            <person name="Karst U."/>
            <person name="Goesmann A."/>
            <person name="Oehm S."/>
            <person name="Puhler A."/>
            <person name="Merkl R."/>
            <person name="Vorwerk S."/>
            <person name="Glaser P."/>
            <person name="Garrido P."/>
            <person name="Rusniok C."/>
            <person name="Buchrieser C."/>
            <person name="Goebel W."/>
            <person name="Chakraborty T."/>
        </authorList>
    </citation>
    <scope>NUCLEOTIDE SEQUENCE [LARGE SCALE GENOMIC DNA]</scope>
    <source>
        <strain>CLIP80459</strain>
    </source>
</reference>
<organism>
    <name type="scientific">Listeria monocytogenes serotype 4b (strain CLIP80459)</name>
    <dbReference type="NCBI Taxonomy" id="568819"/>
    <lineage>
        <taxon>Bacteria</taxon>
        <taxon>Bacillati</taxon>
        <taxon>Bacillota</taxon>
        <taxon>Bacilli</taxon>
        <taxon>Bacillales</taxon>
        <taxon>Listeriaceae</taxon>
        <taxon>Listeria</taxon>
    </lineage>
</organism>
<evidence type="ECO:0000255" key="1">
    <source>
        <dbReference type="HAMAP-Rule" id="MF_01147"/>
    </source>
</evidence>
<sequence length="277" mass="31714">MGNGVQPLDPVAIQIGSISVKWYGVIIASAVVIALLLALSEANKRKMDKEIIVDLLIWAIPISIISARIYYVIFEWDFYKNNLGEIVKIWHGGIAIYGALIGAVLTAIIFSRIKKISFWQLADVVAPSLIIAQAIGRWGNFMNQEAHGAETTRSFLESLHLPDFIINQMYIDGAYYQPTFLYESLWNVLGFIVLLIIRRTKIRRGELFLGYVIWYSFGRFFIEGMRTDSLMWGDFRVSQVLSLLLIVLSIGIIIYRRMKMNPPYYMEDKFGKVVKKK</sequence>